<accession>Q7SIE0</accession>
<proteinExistence type="evidence at protein level"/>
<protein>
    <recommendedName>
        <fullName>Delta-1 crystallin</fullName>
    </recommendedName>
    <alternativeName>
        <fullName>Delta crystallin I</fullName>
    </alternativeName>
</protein>
<keyword id="KW-0002">3D-structure</keyword>
<keyword id="KW-0273">Eye lens protein</keyword>
<keyword id="KW-1185">Reference proteome</keyword>
<comment type="function">
    <text evidence="1">Delta crystallin, the principal crystallin in embryonic lens, is found only in birds and reptiles.</text>
</comment>
<comment type="subunit">
    <text evidence="3">Homotetramer.</text>
</comment>
<comment type="tissue specificity">
    <text evidence="3">Eye lens.</text>
</comment>
<comment type="similarity">
    <text evidence="2">Belongs to the lyase 1 family. Argininosuccinate lyase subfamily.</text>
</comment>
<comment type="caution">
    <text evidence="4">Despite possessing the necessary catalytic residues, this protein does not function as an enzymatically active argininosuccinate lyase.</text>
</comment>
<reference evidence="5" key="1">
    <citation type="journal article" date="2001" name="Biochemistry">
        <title>Structural studies of duck delta 1 and delta 2 crystallin suggest conformational changes occur during catalysis.</title>
        <authorList>
            <person name="Sampaleanu L.M."/>
            <person name="Vallee F."/>
            <person name="Slingsby C."/>
            <person name="Howell P.L."/>
        </authorList>
    </citation>
    <scope>X-RAY CRYSTALLOGRAPHY (2.5 ANGSTROMS)</scope>
    <scope>SUBUNIT</scope>
    <scope>TISSUE SPECIFICITY</scope>
</reference>
<feature type="chain" id="PRO_0000233914" description="Delta-1 crystallin">
    <location>
        <begin position="1"/>
        <end position="466"/>
    </location>
</feature>
<feature type="helix" evidence="6">
    <location>
        <begin position="19"/>
        <end position="24"/>
    </location>
</feature>
<feature type="helix" evidence="6">
    <location>
        <begin position="28"/>
        <end position="31"/>
    </location>
</feature>
<feature type="helix" evidence="6">
    <location>
        <begin position="32"/>
        <end position="34"/>
    </location>
</feature>
<feature type="helix" evidence="6">
    <location>
        <begin position="35"/>
        <end position="51"/>
    </location>
</feature>
<feature type="helix" evidence="6">
    <location>
        <begin position="57"/>
        <end position="75"/>
    </location>
</feature>
<feature type="helix" evidence="6">
    <location>
        <begin position="88"/>
        <end position="100"/>
    </location>
</feature>
<feature type="helix" evidence="6">
    <location>
        <begin position="102"/>
        <end position="108"/>
    </location>
</feature>
<feature type="helix" evidence="6">
    <location>
        <begin position="113"/>
        <end position="149"/>
    </location>
</feature>
<feature type="turn" evidence="6">
    <location>
        <begin position="150"/>
        <end position="152"/>
    </location>
</feature>
<feature type="strand" evidence="6">
    <location>
        <begin position="154"/>
        <end position="159"/>
    </location>
</feature>
<feature type="strand" evidence="6">
    <location>
        <begin position="162"/>
        <end position="168"/>
    </location>
</feature>
<feature type="helix" evidence="6">
    <location>
        <begin position="169"/>
        <end position="194"/>
    </location>
</feature>
<feature type="turn" evidence="6">
    <location>
        <begin position="202"/>
        <end position="205"/>
    </location>
</feature>
<feature type="helix" evidence="6">
    <location>
        <begin position="213"/>
        <end position="220"/>
    </location>
</feature>
<feature type="strand" evidence="6">
    <location>
        <begin position="223"/>
        <end position="225"/>
    </location>
</feature>
<feature type="helix" evidence="6">
    <location>
        <begin position="229"/>
        <end position="234"/>
    </location>
</feature>
<feature type="helix" evidence="6">
    <location>
        <begin position="237"/>
        <end position="263"/>
    </location>
</feature>
<feature type="turn" evidence="6">
    <location>
        <begin position="266"/>
        <end position="268"/>
    </location>
</feature>
<feature type="strand" evidence="6">
    <location>
        <begin position="270"/>
        <end position="272"/>
    </location>
</feature>
<feature type="helix" evidence="6">
    <location>
        <begin position="275"/>
        <end position="277"/>
    </location>
</feature>
<feature type="helix" evidence="6">
    <location>
        <begin position="291"/>
        <end position="314"/>
    </location>
</feature>
<feature type="helix" evidence="6">
    <location>
        <begin position="323"/>
        <end position="327"/>
    </location>
</feature>
<feature type="helix" evidence="6">
    <location>
        <begin position="328"/>
        <end position="352"/>
    </location>
</feature>
<feature type="helix" evidence="6">
    <location>
        <begin position="357"/>
        <end position="362"/>
    </location>
</feature>
<feature type="helix" evidence="6">
    <location>
        <begin position="366"/>
        <end position="369"/>
    </location>
</feature>
<feature type="helix" evidence="6">
    <location>
        <begin position="370"/>
        <end position="379"/>
    </location>
</feature>
<feature type="helix" evidence="6">
    <location>
        <begin position="384"/>
        <end position="400"/>
    </location>
</feature>
<feature type="helix" evidence="6">
    <location>
        <begin position="405"/>
        <end position="407"/>
    </location>
</feature>
<feature type="helix" evidence="6">
    <location>
        <begin position="410"/>
        <end position="414"/>
    </location>
</feature>
<feature type="helix" evidence="6">
    <location>
        <begin position="422"/>
        <end position="427"/>
    </location>
</feature>
<feature type="helix" evidence="6">
    <location>
        <begin position="430"/>
        <end position="434"/>
    </location>
</feature>
<feature type="strand" evidence="6">
    <location>
        <begin position="442"/>
        <end position="444"/>
    </location>
</feature>
<feature type="helix" evidence="6">
    <location>
        <begin position="445"/>
        <end position="460"/>
    </location>
</feature>
<evidence type="ECO:0000250" key="1"/>
<evidence type="ECO:0000250" key="2">
    <source>
        <dbReference type="UniProtKB" id="P24057"/>
    </source>
</evidence>
<evidence type="ECO:0000269" key="3">
    <source>
    </source>
</evidence>
<evidence type="ECO:0000305" key="4"/>
<evidence type="ECO:0000312" key="5">
    <source>
        <dbReference type="PDB" id="1I0A"/>
    </source>
</evidence>
<evidence type="ECO:0007829" key="6">
    <source>
        <dbReference type="PDB" id="1I0A"/>
    </source>
</evidence>
<organism>
    <name type="scientific">Meleagris gallopavo</name>
    <name type="common">Wild turkey</name>
    <dbReference type="NCBI Taxonomy" id="9103"/>
    <lineage>
        <taxon>Eukaryota</taxon>
        <taxon>Metazoa</taxon>
        <taxon>Chordata</taxon>
        <taxon>Craniata</taxon>
        <taxon>Vertebrata</taxon>
        <taxon>Euteleostomi</taxon>
        <taxon>Archelosauria</taxon>
        <taxon>Archosauria</taxon>
        <taxon>Dinosauria</taxon>
        <taxon>Saurischia</taxon>
        <taxon>Theropoda</taxon>
        <taxon>Coelurosauria</taxon>
        <taxon>Aves</taxon>
        <taxon>Neognathae</taxon>
        <taxon>Galloanserae</taxon>
        <taxon>Galliformes</taxon>
        <taxon>Phasianidae</taxon>
        <taxon>Meleagridinae</taxon>
        <taxon>Meleagris</taxon>
    </lineage>
</organism>
<sequence length="466" mass="50836">MATEGDKLLGGRFVGSVDPIMEILSSSISTEQRLTEVDIQASMAYAKALEKASILTKTELEKILSGLEKISEESSKGVLVMTQSDEDIQTAIERRLKELIGDIAGKLQTGRSRNEQVVTDLKLLLKSSISVISTHLLQLIKTLVERAAIEIDIIMPGYTHLQKALPIRWSQFLLSHAVALTRDSERLGEVKKRITVLPLGSGVLAGNPLEIDRELLRSELDMTSITLNSIDAISERDFVVELISVATLLMIHLSKLAEDLIIFSTTEFGFVTLSDAYSTGSSLLPQKKNPDSLELIRSKAGRVFGRLAAILMVLKGIPSTFSKDLQEDKEAVLDVVDTLTAVLQVATGVISTLQINKENMEKALTPELLSTDLALYLVRKGMPIRQAQTASGKAVHLAETKGITINNLTLEDLKSISPLFASDVSQVFSVVNSVEQYTAVGGTAKSSVTAQIEQLRELLKKQKEQA</sequence>
<gene>
    <name type="primary">ASL1</name>
</gene>
<dbReference type="PDB" id="1I0A">
    <property type="method" value="X-ray"/>
    <property type="resolution" value="2.50 A"/>
    <property type="chains" value="A/B/C/D=1-466"/>
</dbReference>
<dbReference type="PDBsum" id="1I0A"/>
<dbReference type="SMR" id="Q7SIE0"/>
<dbReference type="FunCoup" id="Q7SIE0">
    <property type="interactions" value="492"/>
</dbReference>
<dbReference type="InParanoid" id="Q7SIE0"/>
<dbReference type="EvolutionaryTrace" id="Q7SIE0"/>
<dbReference type="Proteomes" id="UP000001645">
    <property type="component" value="Unplaced"/>
</dbReference>
<dbReference type="GO" id="GO:0005829">
    <property type="term" value="C:cytosol"/>
    <property type="evidence" value="ECO:0007669"/>
    <property type="project" value="TreeGrafter"/>
</dbReference>
<dbReference type="GO" id="GO:0005212">
    <property type="term" value="F:structural constituent of eye lens"/>
    <property type="evidence" value="ECO:0000304"/>
    <property type="project" value="UniProtKB"/>
</dbReference>
<dbReference type="GO" id="GO:0042450">
    <property type="term" value="P:arginine biosynthetic process via ornithine"/>
    <property type="evidence" value="ECO:0007669"/>
    <property type="project" value="InterPro"/>
</dbReference>
<dbReference type="CDD" id="cd01359">
    <property type="entry name" value="Argininosuccinate_lyase"/>
    <property type="match status" value="1"/>
</dbReference>
<dbReference type="FunFam" id="1.10.275.10:FF:000002">
    <property type="entry name" value="Argininosuccinate lyase"/>
    <property type="match status" value="1"/>
</dbReference>
<dbReference type="FunFam" id="1.10.40.30:FF:000001">
    <property type="entry name" value="Argininosuccinate lyase"/>
    <property type="match status" value="1"/>
</dbReference>
<dbReference type="FunFam" id="1.20.200.10:FF:000002">
    <property type="entry name" value="Argininosuccinate lyase"/>
    <property type="match status" value="1"/>
</dbReference>
<dbReference type="FunFam" id="1.20.200.10:FF:000015">
    <property type="entry name" value="argininosuccinate lyase isoform X2"/>
    <property type="match status" value="1"/>
</dbReference>
<dbReference type="Gene3D" id="1.10.40.30">
    <property type="entry name" value="Fumarase/aspartase (C-terminal domain)"/>
    <property type="match status" value="1"/>
</dbReference>
<dbReference type="Gene3D" id="1.20.200.10">
    <property type="entry name" value="Fumarase/aspartase (Central domain)"/>
    <property type="match status" value="1"/>
</dbReference>
<dbReference type="Gene3D" id="1.10.275.10">
    <property type="entry name" value="Fumarase/aspartase (N-terminal domain)"/>
    <property type="match status" value="1"/>
</dbReference>
<dbReference type="HAMAP" id="MF_00006">
    <property type="entry name" value="Arg_succ_lyase"/>
    <property type="match status" value="1"/>
</dbReference>
<dbReference type="InterPro" id="IPR029419">
    <property type="entry name" value="Arg_succ_lyase_C"/>
</dbReference>
<dbReference type="InterPro" id="IPR009049">
    <property type="entry name" value="Argininosuccinate_lyase"/>
</dbReference>
<dbReference type="InterPro" id="IPR024083">
    <property type="entry name" value="Fumarase/histidase_N"/>
</dbReference>
<dbReference type="InterPro" id="IPR000362">
    <property type="entry name" value="Fumarate_lyase_fam"/>
</dbReference>
<dbReference type="InterPro" id="IPR022761">
    <property type="entry name" value="Fumarate_lyase_N"/>
</dbReference>
<dbReference type="InterPro" id="IPR008948">
    <property type="entry name" value="L-Aspartase-like"/>
</dbReference>
<dbReference type="NCBIfam" id="TIGR00838">
    <property type="entry name" value="argH"/>
    <property type="match status" value="1"/>
</dbReference>
<dbReference type="PANTHER" id="PTHR43814">
    <property type="entry name" value="ARGININOSUCCINATE LYASE"/>
    <property type="match status" value="1"/>
</dbReference>
<dbReference type="PANTHER" id="PTHR43814:SF1">
    <property type="entry name" value="ARGININOSUCCINATE LYASE"/>
    <property type="match status" value="1"/>
</dbReference>
<dbReference type="Pfam" id="PF14698">
    <property type="entry name" value="ASL_C2"/>
    <property type="match status" value="1"/>
</dbReference>
<dbReference type="Pfam" id="PF00206">
    <property type="entry name" value="Lyase_1"/>
    <property type="match status" value="1"/>
</dbReference>
<dbReference type="PRINTS" id="PR00145">
    <property type="entry name" value="ARGSUCLYASE"/>
</dbReference>
<dbReference type="PRINTS" id="PR00149">
    <property type="entry name" value="FUMRATELYASE"/>
</dbReference>
<dbReference type="SUPFAM" id="SSF48557">
    <property type="entry name" value="L-aspartase-like"/>
    <property type="match status" value="1"/>
</dbReference>
<name>ARLY1_MELGA</name>